<accession>Q9QUI1</accession>
<accession>Q8K2S5</accession>
<accession>Q9JHD8</accession>
<accession>Q9JL54</accession>
<dbReference type="EMBL" id="AB012726">
    <property type="protein sequence ID" value="BAA87047.1"/>
    <property type="molecule type" value="mRNA"/>
</dbReference>
<dbReference type="EMBL" id="AB012727">
    <property type="protein sequence ID" value="BAA87049.1"/>
    <property type="molecule type" value="mRNA"/>
</dbReference>
<dbReference type="EMBL" id="AF212920">
    <property type="protein sequence ID" value="AAF32282.1"/>
    <property type="molecule type" value="mRNA"/>
</dbReference>
<dbReference type="EMBL" id="AF212921">
    <property type="protein sequence ID" value="AAF32283.1"/>
    <property type="molecule type" value="mRNA"/>
</dbReference>
<dbReference type="EMBL" id="AC134563">
    <property type="status" value="NOT_ANNOTATED_CDS"/>
    <property type="molecule type" value="Genomic_DNA"/>
</dbReference>
<dbReference type="EMBL" id="BC030163">
    <property type="protein sequence ID" value="AAH30163.1"/>
    <property type="molecule type" value="mRNA"/>
</dbReference>
<dbReference type="CCDS" id="CCDS37890.1">
    <molecule id="Q9QUI1-1"/>
</dbReference>
<dbReference type="CCDS" id="CCDS50361.1">
    <molecule id="Q9QUI1-2"/>
</dbReference>
<dbReference type="PIR" id="JC7107">
    <property type="entry name" value="JC7107"/>
</dbReference>
<dbReference type="RefSeq" id="NP_075655.2">
    <molecule id="Q9QUI1-2"/>
    <property type="nucleotide sequence ID" value="NM_023166.2"/>
</dbReference>
<dbReference type="RefSeq" id="NP_852117.2">
    <molecule id="Q9QUI1-1"/>
    <property type="nucleotide sequence ID" value="NM_181452.2"/>
</dbReference>
<dbReference type="SMR" id="Q9QUI1"/>
<dbReference type="CORUM" id="Q9QUI1"/>
<dbReference type="FunCoup" id="Q9QUI1">
    <property type="interactions" value="49"/>
</dbReference>
<dbReference type="IntAct" id="Q9QUI1">
    <property type="interactions" value="2"/>
</dbReference>
<dbReference type="STRING" id="10090.ENSMUSP00000097538"/>
<dbReference type="iPTMnet" id="Q9QUI1"/>
<dbReference type="PhosphoSitePlus" id="Q9QUI1"/>
<dbReference type="PaxDb" id="10090-ENSMUSP00000097538"/>
<dbReference type="ProteomicsDB" id="252498">
    <molecule id="Q9QUI1-1"/>
</dbReference>
<dbReference type="ProteomicsDB" id="252499">
    <molecule id="Q9QUI1-2"/>
</dbReference>
<dbReference type="Pumba" id="Q9QUI1"/>
<dbReference type="Antibodypedia" id="29851">
    <property type="antibodies" value="88 antibodies from 15 providers"/>
</dbReference>
<dbReference type="DNASU" id="17826"/>
<dbReference type="Ensembl" id="ENSMUST00000099955.4">
    <molecule id="Q9QUI1-1"/>
    <property type="protein sequence ID" value="ENSMUSP00000097538.4"/>
    <property type="gene ID" value="ENSMUSG00000024939.7"/>
</dbReference>
<dbReference type="Ensembl" id="ENSMUST00000161368.2">
    <molecule id="Q9QUI1-2"/>
    <property type="protein sequence ID" value="ENSMUSP00000124294.2"/>
    <property type="gene ID" value="ENSMUSG00000024939.7"/>
</dbReference>
<dbReference type="GeneID" id="17826"/>
<dbReference type="KEGG" id="mmu:17826"/>
<dbReference type="UCSC" id="uc008gez.1">
    <molecule id="Q9QUI1-1"/>
    <property type="organism name" value="mouse"/>
</dbReference>
<dbReference type="AGR" id="MGI:106595"/>
<dbReference type="CTD" id="23625"/>
<dbReference type="MGI" id="MGI:106595">
    <property type="gene designation" value="Fam89b"/>
</dbReference>
<dbReference type="VEuPathDB" id="HostDB:ENSMUSG00000024939"/>
<dbReference type="eggNOG" id="ENOG502S05U">
    <property type="taxonomic scope" value="Eukaryota"/>
</dbReference>
<dbReference type="GeneTree" id="ENSGT00940000153370"/>
<dbReference type="HOGENOM" id="CLU_128818_0_0_1"/>
<dbReference type="InParanoid" id="Q9QUI1"/>
<dbReference type="OMA" id="MSLCQDM"/>
<dbReference type="OrthoDB" id="1681166at2759"/>
<dbReference type="PhylomeDB" id="Q9QUI1"/>
<dbReference type="BioGRID-ORCS" id="17826">
    <property type="hits" value="1 hit in 76 CRISPR screens"/>
</dbReference>
<dbReference type="ChiTaRS" id="Fam89b">
    <property type="organism name" value="mouse"/>
</dbReference>
<dbReference type="PRO" id="PR:Q9QUI1"/>
<dbReference type="Proteomes" id="UP000000589">
    <property type="component" value="Chromosome 19"/>
</dbReference>
<dbReference type="RNAct" id="Q9QUI1">
    <property type="molecule type" value="protein"/>
</dbReference>
<dbReference type="Bgee" id="ENSMUSG00000024939">
    <property type="expression patterns" value="Expressed in ganglionic eminence and 87 other cell types or tissues"/>
</dbReference>
<dbReference type="ExpressionAtlas" id="Q9QUI1">
    <property type="expression patterns" value="baseline"/>
</dbReference>
<dbReference type="GO" id="GO:0009986">
    <property type="term" value="C:cell surface"/>
    <property type="evidence" value="ECO:0007669"/>
    <property type="project" value="UniProtKB-SubCell"/>
</dbReference>
<dbReference type="GO" id="GO:0005737">
    <property type="term" value="C:cytoplasm"/>
    <property type="evidence" value="ECO:0000314"/>
    <property type="project" value="UniProtKB"/>
</dbReference>
<dbReference type="GO" id="GO:0030027">
    <property type="term" value="C:lamellipodium"/>
    <property type="evidence" value="ECO:0000314"/>
    <property type="project" value="UniProtKB"/>
</dbReference>
<dbReference type="GO" id="GO:0001222">
    <property type="term" value="F:transcription corepressor binding"/>
    <property type="evidence" value="ECO:0000314"/>
    <property type="project" value="UniProtKB"/>
</dbReference>
<dbReference type="GO" id="GO:0030010">
    <property type="term" value="P:establishment of cell polarity"/>
    <property type="evidence" value="ECO:0000315"/>
    <property type="project" value="UniProtKB"/>
</dbReference>
<dbReference type="GO" id="GO:0060392">
    <property type="term" value="P:negative regulation of SMAD protein signal transduction"/>
    <property type="evidence" value="ECO:0000314"/>
    <property type="project" value="UniProtKB"/>
</dbReference>
<dbReference type="GO" id="GO:0030512">
    <property type="term" value="P:negative regulation of transforming growth factor beta receptor signaling pathway"/>
    <property type="evidence" value="ECO:0000314"/>
    <property type="project" value="UniProtKB"/>
</dbReference>
<dbReference type="GO" id="GO:0030335">
    <property type="term" value="P:positive regulation of cell migration"/>
    <property type="evidence" value="ECO:0000315"/>
    <property type="project" value="UniProtKB"/>
</dbReference>
<dbReference type="InterPro" id="IPR039499">
    <property type="entry name" value="LURA1/LRA25"/>
</dbReference>
<dbReference type="PANTHER" id="PTHR46949">
    <property type="entry name" value="LEUCINE REPEAT ADAPTER PROTEIN 25"/>
    <property type="match status" value="1"/>
</dbReference>
<dbReference type="PANTHER" id="PTHR46949:SF2">
    <property type="entry name" value="LEUCINE REPEAT ADAPTER PROTEIN 25"/>
    <property type="match status" value="1"/>
</dbReference>
<dbReference type="Pfam" id="PF14854">
    <property type="entry name" value="LURAP"/>
    <property type="match status" value="1"/>
</dbReference>
<name>LRA25_MOUSE</name>
<protein>
    <recommendedName>
        <fullName evidence="9">Leucine repeat adapter protein 25</fullName>
    </recommendedName>
    <alternativeName>
        <fullName evidence="8">C184L ORF2 protein</fullName>
    </alternativeName>
    <alternativeName>
        <fullName evidence="8">C184M protein</fullName>
    </alternativeName>
    <alternativeName>
        <fullName evidence="10">MMTV receptor</fullName>
    </alternativeName>
</protein>
<feature type="chain" id="PRO_0000420996" description="Leucine repeat adapter protein 25">
    <location>
        <begin position="1"/>
        <end position="189"/>
    </location>
</feature>
<feature type="repeat" description="LRR" evidence="1">
    <location>
        <begin position="86"/>
        <end position="114"/>
    </location>
</feature>
<feature type="region of interest" description="Disordered" evidence="3">
    <location>
        <begin position="54"/>
        <end position="82"/>
    </location>
</feature>
<feature type="region of interest" description="Disordered" evidence="3">
    <location>
        <begin position="136"/>
        <end position="175"/>
    </location>
</feature>
<feature type="compositionally biased region" description="Low complexity" evidence="3">
    <location>
        <begin position="68"/>
        <end position="79"/>
    </location>
</feature>
<feature type="compositionally biased region" description="Pro residues" evidence="3">
    <location>
        <begin position="159"/>
        <end position="169"/>
    </location>
</feature>
<feature type="modified residue" description="Phosphoserine" evidence="13">
    <location>
        <position position="28"/>
    </location>
</feature>
<feature type="modified residue" description="Phosphoserine" evidence="2">
    <location>
        <position position="188"/>
    </location>
</feature>
<feature type="splice variant" id="VSP_045017" description="In isoform 2." evidence="10">
    <location>
        <begin position="98"/>
        <end position="110"/>
    </location>
</feature>
<feature type="sequence conflict" description="In Ref. 5; AAH30163." evidence="11" ref="5">
    <original>A</original>
    <variation>V</variation>
    <location>
        <position position="61"/>
    </location>
</feature>
<feature type="sequence conflict" description="In Ref. 2; AAF32283 and 3; AAF32282." evidence="11" ref="2 3">
    <original>D</original>
    <variation>H</variation>
    <location>
        <position position="127"/>
    </location>
</feature>
<proteinExistence type="evidence at protein level"/>
<evidence type="ECO:0000250" key="1">
    <source>
        <dbReference type="UniProtKB" id="Q566R4"/>
    </source>
</evidence>
<evidence type="ECO:0000250" key="2">
    <source>
        <dbReference type="UniProtKB" id="Q8N5H3"/>
    </source>
</evidence>
<evidence type="ECO:0000256" key="3">
    <source>
        <dbReference type="SAM" id="MobiDB-lite"/>
    </source>
</evidence>
<evidence type="ECO:0000269" key="4">
    <source>
    </source>
</evidence>
<evidence type="ECO:0000269" key="5">
    <source>
    </source>
</evidence>
<evidence type="ECO:0000269" key="6">
    <source>
    </source>
</evidence>
<evidence type="ECO:0000269" key="7">
    <source>
    </source>
</evidence>
<evidence type="ECO:0000303" key="8">
    <source>
    </source>
</evidence>
<evidence type="ECO:0000303" key="9">
    <source>
    </source>
</evidence>
<evidence type="ECO:0000303" key="10">
    <source>
    </source>
</evidence>
<evidence type="ECO:0000305" key="11"/>
<evidence type="ECO:0000312" key="12">
    <source>
        <dbReference type="MGI" id="MGI:106595"/>
    </source>
</evidence>
<evidence type="ECO:0007744" key="13">
    <source>
    </source>
</evidence>
<sequence>MNGLPATEAPGGAGCALAGLPPLPRGLSGLLNASGGSWRELERVYSQRSRIHDELSRAARAPDGPRHAAGSANSGSAAGPRRPVNLDSALAALRKEMVGLRQLDMSLLCQLWGLYESIQDYKHLCQDLSLCQDLSSSLHSDSSYPPDAGLSDDEEPPDASLPPDPPPLTVPQTHNARDQWLQDAFQISL</sequence>
<comment type="function">
    <text evidence="5 6">Negatively regulates TGF-beta-induced signaling; in cooperation with SKI prevents the translocation of SMAD2 from the nucleus to the cytoplasm in response to TGF-beta (PubMed:12646588). Acts as an adapter that mediates the specific recognition of LIMK1 by CDC42BPA and CDC42BPB in the lamellipodia. LRAP25-mediated CDC42BPA/CDC42BPB targeting to LIMK1 and the lamellipodium results in LIMK1 activation and the subsequent phosphorylation of CFL1 which is important for lamellipodial F-actin regulation (PubMed:25107909).</text>
</comment>
<comment type="function">
    <molecule>Isoform 2</molecule>
    <text evidence="7">(Microbial infection) May be a receptor for mouse mammary tumor virus (MMTV).</text>
</comment>
<comment type="subunit">
    <text evidence="5 6">Interacts with SKI (PubMed:12646588). Interacts (via LRR repeat) with CDC42BPA (via AGC-kinase C-terminal domain), CDC42BPB (via AGC-kinase C-terminal domain) and LIMK1 (via LIM zinc-binding domains). Forms a tripartite complex with CDC42BPA, CDC42BPB and LIMK1 (PubMed:25107909).</text>
</comment>
<comment type="subunit">
    <molecule>Isoform 2</molecule>
    <text evidence="7">(Microbial infection) Interacts with mouse mammary tumor virus (MMTV) envelope glycoprotein gp70.</text>
</comment>
<comment type="interaction">
    <interactant intactId="EBI-6503100">
        <id>Q9QUI1</id>
    </interactant>
    <interactant intactId="EBI-347281">
        <id>P12755</id>
        <label>SKI</label>
    </interactant>
    <organismsDiffer>true</organismsDiffer>
    <experiments>6</experiments>
</comment>
<comment type="subcellular location">
    <molecule>Isoform 1</molecule>
    <subcellularLocation>
        <location evidence="5">Cytoplasm</location>
    </subcellularLocation>
    <subcellularLocation>
        <location evidence="6">Cell projection</location>
        <location evidence="6">Lamellipodium</location>
    </subcellularLocation>
    <text evidence="6">Co-localizes with CDC42BPA, CDC42BPB and LIMK1 in the lamellipodium.</text>
</comment>
<comment type="subcellular location">
    <molecule>Isoform 2</molecule>
    <subcellularLocation>
        <location evidence="7">Cell surface</location>
    </subcellularLocation>
</comment>
<comment type="alternative products">
    <event type="alternative splicing"/>
    <isoform>
        <id>Q9QUI1-1</id>
        <name>1</name>
        <name>MMTV receptor variant 2</name>
        <sequence type="displayed"/>
    </isoform>
    <isoform>
        <id>Q9QUI1-2</id>
        <name>2</name>
        <name>MMTV receptor variant 1</name>
        <sequence type="described" ref="VSP_045017"/>
    </isoform>
</comment>
<comment type="tissue specificity">
    <text evidence="4 7">Widely expressed. Expressed in the early postnatal brain.</text>
</comment>
<comment type="developmental stage">
    <text evidence="4">Expressed in forebrain at 16 dpc.</text>
</comment>
<comment type="similarity">
    <text evidence="11">Belongs to the FAM89 family.</text>
</comment>
<reference key="1">
    <citation type="journal article" date="1999" name="Biochem. Biophys. Res. Commun.">
        <title>Novel related cDNAs (C184L, C184M, and C184S) from developing mouse brain encoding two apparently unrelated proteins.</title>
        <authorList>
            <person name="Sakuma-Takagi M."/>
            <person name="Tohyama Y."/>
            <person name="Kasama-Yoshida H."/>
            <person name="Sakagami H."/>
            <person name="Kondo H."/>
            <person name="Kurihara T."/>
        </authorList>
    </citation>
    <scope>NUCLEOTIDE SEQUENCE [MRNA] (ISOFORM 1)</scope>
    <scope>DEVELOPMENTAL STAGE</scope>
    <scope>TISSUE SPECIFICITY</scope>
    <source>
        <strain>ICR</strain>
        <tissue>Forebrain</tissue>
    </source>
</reference>
<reference key="2">
    <citation type="journal article" date="1998" name="J. Virol.">
        <title>A novel membrane protein is a mouse mammary tumor virus receptor.</title>
        <authorList>
            <person name="Golovkina T.V."/>
            <person name="Dzuris J."/>
            <person name="van den Hoogen B."/>
            <person name="Jaffe A.B."/>
            <person name="Wright P.C."/>
            <person name="Cofer S.M."/>
            <person name="Ross S.R."/>
        </authorList>
    </citation>
    <scope>NUCLEOTIDE SEQUENCE [MRNA] (ISOFORM 2)</scope>
    <scope>FUNCTION (MICROBIAL INFECTION)</scope>
    <scope>TISSUE SPECIFICITY</scope>
    <scope>INTERACTION WITH MMTV ENV (MICROBIAL INFECTION)</scope>
    <scope>SUBCELLULAR LOCATION (ISOFORM 2)</scope>
    <source>
        <strain>Swiss Webster</strain>
    </source>
</reference>
<reference key="3">
    <citation type="submission" date="1999-12" db="EMBL/GenBank/DDBJ databases">
        <authorList>
            <person name="Golovkina T.V."/>
            <person name="Dzuris J."/>
            <person name="van den Hoogen B."/>
            <person name="Ross S.R."/>
        </authorList>
    </citation>
    <scope>NUCLEOTIDE SEQUENCE [MRNA] (ISOFORM 1)</scope>
    <source>
        <strain>Swiss Webster</strain>
    </source>
</reference>
<reference key="4">
    <citation type="journal article" date="2009" name="PLoS Biol.">
        <title>Lineage-specific biology revealed by a finished genome assembly of the mouse.</title>
        <authorList>
            <person name="Church D.M."/>
            <person name="Goodstadt L."/>
            <person name="Hillier L.W."/>
            <person name="Zody M.C."/>
            <person name="Goldstein S."/>
            <person name="She X."/>
            <person name="Bult C.J."/>
            <person name="Agarwala R."/>
            <person name="Cherry J.L."/>
            <person name="DiCuccio M."/>
            <person name="Hlavina W."/>
            <person name="Kapustin Y."/>
            <person name="Meric P."/>
            <person name="Maglott D."/>
            <person name="Birtle Z."/>
            <person name="Marques A.C."/>
            <person name="Graves T."/>
            <person name="Zhou S."/>
            <person name="Teague B."/>
            <person name="Potamousis K."/>
            <person name="Churas C."/>
            <person name="Place M."/>
            <person name="Herschleb J."/>
            <person name="Runnheim R."/>
            <person name="Forrest D."/>
            <person name="Amos-Landgraf J."/>
            <person name="Schwartz D.C."/>
            <person name="Cheng Z."/>
            <person name="Lindblad-Toh K."/>
            <person name="Eichler E.E."/>
            <person name="Ponting C.P."/>
        </authorList>
    </citation>
    <scope>NUCLEOTIDE SEQUENCE [LARGE SCALE GENOMIC DNA]</scope>
    <source>
        <strain>C57BL/6J</strain>
    </source>
</reference>
<reference key="5">
    <citation type="journal article" date="2004" name="Genome Res.">
        <title>The status, quality, and expansion of the NIH full-length cDNA project: the Mammalian Gene Collection (MGC).</title>
        <authorList>
            <consortium name="The MGC Project Team"/>
        </authorList>
    </citation>
    <scope>NUCLEOTIDE SEQUENCE [LARGE SCALE MRNA] (ISOFORM 1)</scope>
    <source>
        <strain>Czech II</strain>
        <tissue>Mammary tumor</tissue>
    </source>
</reference>
<reference key="6">
    <citation type="journal article" date="2003" name="J. Biol. Chem.">
        <title>The Ski-binding protein C184M negatively regulates tumor growth factor-beta signaling by sequestering the Smad proteins in the cytoplasm.</title>
        <authorList>
            <person name="Kokura K."/>
            <person name="Kim H."/>
            <person name="Shinagawa T."/>
            <person name="Khan M.M."/>
            <person name="Nomura T."/>
            <person name="Ishii S."/>
        </authorList>
    </citation>
    <scope>FUNCTION</scope>
    <scope>SUBCELLULAR LOCATION</scope>
    <scope>INTERACTION WITH SKI</scope>
</reference>
<reference key="7">
    <citation type="journal article" date="2010" name="Cell">
        <title>A tissue-specific atlas of mouse protein phosphorylation and expression.</title>
        <authorList>
            <person name="Huttlin E.L."/>
            <person name="Jedrychowski M.P."/>
            <person name="Elias J.E."/>
            <person name="Goswami T."/>
            <person name="Rad R."/>
            <person name="Beausoleil S.A."/>
            <person name="Villen J."/>
            <person name="Haas W."/>
            <person name="Sowa M.E."/>
            <person name="Gygi S.P."/>
        </authorList>
    </citation>
    <scope>PHOSPHORYLATION [LARGE SCALE ANALYSIS] AT SER-28</scope>
    <scope>IDENTIFICATION BY MASS SPECTROMETRY [LARGE SCALE ANALYSIS]</scope>
    <source>
        <tissue>Brown adipose tissue</tissue>
        <tissue>Kidney</tissue>
    </source>
</reference>
<reference key="8">
    <citation type="journal article" date="2014" name="J. Biol. Chem.">
        <title>Adaptor protein LRAP25 mediates myotonic dystrophy kinase-related Cdc42-binding kinase (MRCK) regulation of LIMK1 protein in lamellipodial F-actin dynamics.</title>
        <authorList>
            <person name="Lee I.C."/>
            <person name="Leung T."/>
            <person name="Tan I."/>
        </authorList>
    </citation>
    <scope>FUNCTION</scope>
    <scope>INTERACTION WITH CDC42BPA; CDC42BPB AND LIMK1</scope>
    <scope>SUBCELLULAR LOCATION</scope>
    <source>
        <tissue>Brain</tissue>
    </source>
</reference>
<organism>
    <name type="scientific">Mus musculus</name>
    <name type="common">Mouse</name>
    <dbReference type="NCBI Taxonomy" id="10090"/>
    <lineage>
        <taxon>Eukaryota</taxon>
        <taxon>Metazoa</taxon>
        <taxon>Chordata</taxon>
        <taxon>Craniata</taxon>
        <taxon>Vertebrata</taxon>
        <taxon>Euteleostomi</taxon>
        <taxon>Mammalia</taxon>
        <taxon>Eutheria</taxon>
        <taxon>Euarchontoglires</taxon>
        <taxon>Glires</taxon>
        <taxon>Rodentia</taxon>
        <taxon>Myomorpha</taxon>
        <taxon>Muroidea</taxon>
        <taxon>Muridae</taxon>
        <taxon>Murinae</taxon>
        <taxon>Mus</taxon>
        <taxon>Mus</taxon>
    </lineage>
</organism>
<gene>
    <name evidence="12" type="primary">Fam89b</name>
    <name evidence="8" type="synonym">C184m</name>
    <name evidence="9" type="synonym">Lrap25</name>
    <name evidence="10" type="synonym">Mtvr2</name>
</gene>
<keyword id="KW-0025">Alternative splicing</keyword>
<keyword id="KW-0966">Cell projection</keyword>
<keyword id="KW-0963">Cytoplasm</keyword>
<keyword id="KW-0433">Leucine-rich repeat</keyword>
<keyword id="KW-0597">Phosphoprotein</keyword>
<keyword id="KW-0675">Receptor</keyword>
<keyword id="KW-1185">Reference proteome</keyword>
<keyword id="KW-0677">Repeat</keyword>